<reference key="1">
    <citation type="journal article" date="2006" name="Mamm. Genome">
        <title>Investigation of the role of the agouti signaling protein gene (ASIP) in coat color evolution in primates.</title>
        <authorList>
            <person name="Mundy N.I."/>
            <person name="Kelly J."/>
        </authorList>
    </citation>
    <scope>NUCLEOTIDE SEQUENCE [GENOMIC DNA]</scope>
</reference>
<dbReference type="EMBL" id="EF094495">
    <property type="protein sequence ID" value="ABL84293.1"/>
    <property type="molecule type" value="Genomic_DNA"/>
</dbReference>
<dbReference type="GlyCosmos" id="A1YL78">
    <property type="glycosylation" value="1 site, No reported glycans"/>
</dbReference>
<dbReference type="GO" id="GO:0005615">
    <property type="term" value="C:extracellular space"/>
    <property type="evidence" value="ECO:0000250"/>
    <property type="project" value="UniProtKB"/>
</dbReference>
<dbReference type="GO" id="GO:0031779">
    <property type="term" value="F:melanocortin receptor binding"/>
    <property type="evidence" value="ECO:0007669"/>
    <property type="project" value="TreeGrafter"/>
</dbReference>
<dbReference type="GO" id="GO:0005184">
    <property type="term" value="F:neuropeptide hormone activity"/>
    <property type="evidence" value="ECO:0007669"/>
    <property type="project" value="TreeGrafter"/>
</dbReference>
<dbReference type="GO" id="GO:0009755">
    <property type="term" value="P:hormone-mediated signaling pathway"/>
    <property type="evidence" value="ECO:0007669"/>
    <property type="project" value="InterPro"/>
</dbReference>
<dbReference type="GO" id="GO:0042438">
    <property type="term" value="P:melanin biosynthetic process"/>
    <property type="evidence" value="ECO:0000250"/>
    <property type="project" value="UniProtKB"/>
</dbReference>
<dbReference type="GO" id="GO:0032438">
    <property type="term" value="P:melanosome organization"/>
    <property type="evidence" value="ECO:0007669"/>
    <property type="project" value="TreeGrafter"/>
</dbReference>
<dbReference type="FunFam" id="4.10.760.10:FF:000002">
    <property type="entry name" value="Agouti-signaling protein"/>
    <property type="match status" value="1"/>
</dbReference>
<dbReference type="Gene3D" id="4.10.760.10">
    <property type="entry name" value="Agouti domain"/>
    <property type="match status" value="1"/>
</dbReference>
<dbReference type="InterPro" id="IPR007733">
    <property type="entry name" value="Agouti"/>
</dbReference>
<dbReference type="InterPro" id="IPR027300">
    <property type="entry name" value="Agouti_dom"/>
</dbReference>
<dbReference type="InterPro" id="IPR036836">
    <property type="entry name" value="Agouti_dom_sf"/>
</dbReference>
<dbReference type="PANTHER" id="PTHR16551">
    <property type="entry name" value="AGOUTI RELATED"/>
    <property type="match status" value="1"/>
</dbReference>
<dbReference type="PANTHER" id="PTHR16551:SF1">
    <property type="entry name" value="AGOUTI-SIGNALING PROTEIN"/>
    <property type="match status" value="1"/>
</dbReference>
<dbReference type="Pfam" id="PF05039">
    <property type="entry name" value="Agouti"/>
    <property type="match status" value="1"/>
</dbReference>
<dbReference type="SMART" id="SM00792">
    <property type="entry name" value="Agouti"/>
    <property type="match status" value="1"/>
</dbReference>
<dbReference type="SUPFAM" id="SSF57055">
    <property type="entry name" value="Agouti-related protein"/>
    <property type="match status" value="1"/>
</dbReference>
<dbReference type="PROSITE" id="PS60024">
    <property type="entry name" value="AGOUTI_1"/>
    <property type="match status" value="1"/>
</dbReference>
<dbReference type="PROSITE" id="PS51150">
    <property type="entry name" value="AGOUTI_2"/>
    <property type="match status" value="1"/>
</dbReference>
<name>ASIP_CALGE</name>
<gene>
    <name type="primary">ASIP</name>
</gene>
<comment type="function">
    <text evidence="3">Involved in the regulation of melanogenesis. The binding of ASP to MC1R precludes alpha-MSH initiated signaling and thus blocks production of cAMP, leading to a down-regulation of eumelanogenesis (brown/black pigment) and thus increasing synthesis of pheomelanin (yellow/red pigment) (By similarity).</text>
</comment>
<comment type="subcellular location">
    <subcellularLocation>
        <location evidence="2">Secreted</location>
    </subcellularLocation>
</comment>
<comment type="domain">
    <text evidence="1">The presence of a 'disulfide through disulfide knot' structurally defines this protein as a knottin.</text>
</comment>
<sequence length="132" mass="14627">MDVTRLLLATLLVFLCFFAAYSHLPPEEKLRDDRSLRSNSSVNLLDLPSVSIVALNKKSKKISRKEAEKKRSSKKEASKQKVARPRTPLSVPCVSTRGSCKPPAPACCHPCASCQCRFFRSACSCRVLNVNC</sequence>
<protein>
    <recommendedName>
        <fullName>Agouti-signaling protein</fullName>
        <shortName>ASP</shortName>
    </recommendedName>
    <alternativeName>
        <fullName>Agouti switch protein</fullName>
    </alternativeName>
</protein>
<evidence type="ECO:0000250" key="1"/>
<evidence type="ECO:0000250" key="2">
    <source>
        <dbReference type="UniProtKB" id="P42127"/>
    </source>
</evidence>
<evidence type="ECO:0000250" key="3">
    <source>
        <dbReference type="UniProtKB" id="Q03288"/>
    </source>
</evidence>
<evidence type="ECO:0000255" key="4"/>
<evidence type="ECO:0000255" key="5">
    <source>
        <dbReference type="PROSITE-ProRule" id="PRU00494"/>
    </source>
</evidence>
<evidence type="ECO:0000256" key="6">
    <source>
        <dbReference type="SAM" id="MobiDB-lite"/>
    </source>
</evidence>
<keyword id="KW-1015">Disulfide bond</keyword>
<keyword id="KW-0325">Glycoprotein</keyword>
<keyword id="KW-0960">Knottin</keyword>
<keyword id="KW-0964">Secreted</keyword>
<keyword id="KW-0732">Signal</keyword>
<feature type="signal peptide" evidence="4">
    <location>
        <begin position="1"/>
        <end position="22"/>
    </location>
</feature>
<feature type="chain" id="PRO_0000285050" description="Agouti-signaling protein">
    <location>
        <begin position="23"/>
        <end position="132"/>
    </location>
</feature>
<feature type="domain" description="Agouti" evidence="5">
    <location>
        <begin position="93"/>
        <end position="132"/>
    </location>
</feature>
<feature type="region of interest" description="Disordered" evidence="6">
    <location>
        <begin position="61"/>
        <end position="93"/>
    </location>
</feature>
<feature type="compositionally biased region" description="Basic and acidic residues" evidence="6">
    <location>
        <begin position="64"/>
        <end position="79"/>
    </location>
</feature>
<feature type="glycosylation site" description="N-linked (GlcNAc...) asparagine" evidence="4">
    <location>
        <position position="39"/>
    </location>
</feature>
<feature type="disulfide bond" evidence="5">
    <location>
        <begin position="93"/>
        <end position="108"/>
    </location>
</feature>
<feature type="disulfide bond" evidence="5">
    <location>
        <begin position="100"/>
        <end position="114"/>
    </location>
</feature>
<feature type="disulfide bond" evidence="5">
    <location>
        <begin position="107"/>
        <end position="125"/>
    </location>
</feature>
<feature type="disulfide bond" evidence="5">
    <location>
        <begin position="111"/>
        <end position="132"/>
    </location>
</feature>
<feature type="disulfide bond" evidence="5">
    <location>
        <begin position="116"/>
        <end position="123"/>
    </location>
</feature>
<accession>A1YL78</accession>
<proteinExistence type="inferred from homology"/>
<organism>
    <name type="scientific">Callithrix geoffroyi</name>
    <name type="common">Geoffroy's marmoset</name>
    <dbReference type="NCBI Taxonomy" id="52231"/>
    <lineage>
        <taxon>Eukaryota</taxon>
        <taxon>Metazoa</taxon>
        <taxon>Chordata</taxon>
        <taxon>Craniata</taxon>
        <taxon>Vertebrata</taxon>
        <taxon>Euteleostomi</taxon>
        <taxon>Mammalia</taxon>
        <taxon>Eutheria</taxon>
        <taxon>Euarchontoglires</taxon>
        <taxon>Primates</taxon>
        <taxon>Haplorrhini</taxon>
        <taxon>Platyrrhini</taxon>
        <taxon>Cebidae</taxon>
        <taxon>Callitrichinae</taxon>
        <taxon>Callithrix</taxon>
        <taxon>Callithrix</taxon>
    </lineage>
</organism>